<comment type="function">
    <text evidence="1">NDH shuttles electrons from NAD(P)H:plastoquinone, via FMN and iron-sulfur (Fe-S) centers, to quinones in the photosynthetic chain and possibly in a chloroplast respiratory chain. The immediate electron acceptor for the enzyme in this species is believed to be plastoquinone. Couples the redox reaction to proton translocation, and thus conserves the redox energy in a proton gradient.</text>
</comment>
<comment type="catalytic activity">
    <reaction evidence="1">
        <text>a plastoquinone + NADH + (n+1) H(+)(in) = a plastoquinol + NAD(+) + n H(+)(out)</text>
        <dbReference type="Rhea" id="RHEA:42608"/>
        <dbReference type="Rhea" id="RHEA-COMP:9561"/>
        <dbReference type="Rhea" id="RHEA-COMP:9562"/>
        <dbReference type="ChEBI" id="CHEBI:15378"/>
        <dbReference type="ChEBI" id="CHEBI:17757"/>
        <dbReference type="ChEBI" id="CHEBI:57540"/>
        <dbReference type="ChEBI" id="CHEBI:57945"/>
        <dbReference type="ChEBI" id="CHEBI:62192"/>
    </reaction>
</comment>
<comment type="catalytic activity">
    <reaction evidence="1">
        <text>a plastoquinone + NADPH + (n+1) H(+)(in) = a plastoquinol + NADP(+) + n H(+)(out)</text>
        <dbReference type="Rhea" id="RHEA:42612"/>
        <dbReference type="Rhea" id="RHEA-COMP:9561"/>
        <dbReference type="Rhea" id="RHEA-COMP:9562"/>
        <dbReference type="ChEBI" id="CHEBI:15378"/>
        <dbReference type="ChEBI" id="CHEBI:17757"/>
        <dbReference type="ChEBI" id="CHEBI:57783"/>
        <dbReference type="ChEBI" id="CHEBI:58349"/>
        <dbReference type="ChEBI" id="CHEBI:62192"/>
    </reaction>
</comment>
<comment type="cofactor">
    <cofactor evidence="1">
        <name>[4Fe-4S] cluster</name>
        <dbReference type="ChEBI" id="CHEBI:49883"/>
    </cofactor>
    <text evidence="1">Binds 1 [4Fe-4S] cluster.</text>
</comment>
<comment type="subunit">
    <text evidence="1">NDH is composed of at least 16 different subunits, 5 of which are encoded in the nucleus.</text>
</comment>
<comment type="subcellular location">
    <subcellularLocation>
        <location evidence="1">Plastid</location>
        <location evidence="1">Chloroplast thylakoid membrane</location>
        <topology evidence="1">Peripheral membrane protein</topology>
        <orientation evidence="1">Stromal side</orientation>
    </subcellularLocation>
</comment>
<comment type="similarity">
    <text evidence="1">Belongs to the complex I 20 kDa subunit family.</text>
</comment>
<sequence>MNSVEFPLLDRRTKNSVISTTSNDLSNWSRLSSLWPLLYGTSCCFIEFASLIGSRFDFDRYGLVPRSSPRQADLVLTAGTVTMKMAPSLVRLYEQMPEPKYVIAMGACTITGGMFSTDSYSTVRGVDKLIPVDVYLPGCPPKPEAVIDAITKLRKKISREIYEDRVRSQRVNRYFTTNHKFLIGRSIHIGNSDKGFLYQPPATSKLPAEKFFKYKSSAPSPSHELVN</sequence>
<organism>
    <name type="scientific">Pelargonium hortorum</name>
    <name type="common">Common geranium</name>
    <name type="synonym">Pelargonium inquinans x Pelargonium zonale</name>
    <dbReference type="NCBI Taxonomy" id="4031"/>
    <lineage>
        <taxon>Eukaryota</taxon>
        <taxon>Viridiplantae</taxon>
        <taxon>Streptophyta</taxon>
        <taxon>Embryophyta</taxon>
        <taxon>Tracheophyta</taxon>
        <taxon>Spermatophyta</taxon>
        <taxon>Magnoliopsida</taxon>
        <taxon>eudicotyledons</taxon>
        <taxon>Gunneridae</taxon>
        <taxon>Pentapetalae</taxon>
        <taxon>rosids</taxon>
        <taxon>malvids</taxon>
        <taxon>Geraniales</taxon>
        <taxon>Geraniaceae</taxon>
        <taxon>Pelargonium</taxon>
    </lineage>
</organism>
<accession>Q06FV6</accession>
<gene>
    <name evidence="1" type="primary">ndhK</name>
</gene>
<feature type="chain" id="PRO_0000358573" description="NAD(P)H-quinone oxidoreductase subunit K, chloroplastic">
    <location>
        <begin position="1"/>
        <end position="227"/>
    </location>
</feature>
<feature type="binding site" evidence="1">
    <location>
        <position position="43"/>
    </location>
    <ligand>
        <name>[4Fe-4S] cluster</name>
        <dbReference type="ChEBI" id="CHEBI:49883"/>
    </ligand>
</feature>
<feature type="binding site" evidence="1">
    <location>
        <position position="44"/>
    </location>
    <ligand>
        <name>[4Fe-4S] cluster</name>
        <dbReference type="ChEBI" id="CHEBI:49883"/>
    </ligand>
</feature>
<feature type="binding site" evidence="1">
    <location>
        <position position="108"/>
    </location>
    <ligand>
        <name>[4Fe-4S] cluster</name>
        <dbReference type="ChEBI" id="CHEBI:49883"/>
    </ligand>
</feature>
<feature type="binding site" evidence="1">
    <location>
        <position position="139"/>
    </location>
    <ligand>
        <name>[4Fe-4S] cluster</name>
        <dbReference type="ChEBI" id="CHEBI:49883"/>
    </ligand>
</feature>
<name>NDHK_PELHO</name>
<proteinExistence type="inferred from homology"/>
<reference key="1">
    <citation type="journal article" date="2006" name="Mol. Biol. Evol.">
        <title>The complete chloroplast genome sequence of Pelargonium x hortorum: organization and evolution of the largest and most highly rearranged chloroplast genome of land plants.</title>
        <authorList>
            <person name="Chumley T.W."/>
            <person name="Palmer J.D."/>
            <person name="Mower J.P."/>
            <person name="Fourcade H.M."/>
            <person name="Calie P.J."/>
            <person name="Boore J.L."/>
            <person name="Jansen R.K."/>
        </authorList>
    </citation>
    <scope>NUCLEOTIDE SEQUENCE [LARGE SCALE GENOMIC DNA]</scope>
    <source>
        <strain>cv. Ringo White</strain>
    </source>
</reference>
<geneLocation type="chloroplast"/>
<protein>
    <recommendedName>
        <fullName evidence="1">NAD(P)H-quinone oxidoreductase subunit K, chloroplastic</fullName>
        <ecNumber evidence="1">7.1.1.-</ecNumber>
    </recommendedName>
    <alternativeName>
        <fullName evidence="1">NAD(P)H dehydrogenase subunit K</fullName>
    </alternativeName>
    <alternativeName>
        <fullName evidence="1">NADH-plastoquinone oxidoreductase subunit K</fullName>
    </alternativeName>
</protein>
<dbReference type="EC" id="7.1.1.-" evidence="1"/>
<dbReference type="EMBL" id="DQ897681">
    <property type="protein sequence ID" value="ABI17266.1"/>
    <property type="molecule type" value="Genomic_DNA"/>
</dbReference>
<dbReference type="RefSeq" id="YP_784075.1">
    <property type="nucleotide sequence ID" value="NC_008454.1"/>
</dbReference>
<dbReference type="SMR" id="Q06FV6"/>
<dbReference type="GeneID" id="4362894"/>
<dbReference type="GO" id="GO:0009535">
    <property type="term" value="C:chloroplast thylakoid membrane"/>
    <property type="evidence" value="ECO:0007669"/>
    <property type="project" value="UniProtKB-SubCell"/>
</dbReference>
<dbReference type="GO" id="GO:0045271">
    <property type="term" value="C:respiratory chain complex I"/>
    <property type="evidence" value="ECO:0007669"/>
    <property type="project" value="TreeGrafter"/>
</dbReference>
<dbReference type="GO" id="GO:0051539">
    <property type="term" value="F:4 iron, 4 sulfur cluster binding"/>
    <property type="evidence" value="ECO:0007669"/>
    <property type="project" value="UniProtKB-KW"/>
</dbReference>
<dbReference type="GO" id="GO:0005506">
    <property type="term" value="F:iron ion binding"/>
    <property type="evidence" value="ECO:0007669"/>
    <property type="project" value="UniProtKB-UniRule"/>
</dbReference>
<dbReference type="GO" id="GO:0008137">
    <property type="term" value="F:NADH dehydrogenase (ubiquinone) activity"/>
    <property type="evidence" value="ECO:0007669"/>
    <property type="project" value="InterPro"/>
</dbReference>
<dbReference type="GO" id="GO:0048038">
    <property type="term" value="F:quinone binding"/>
    <property type="evidence" value="ECO:0007669"/>
    <property type="project" value="UniProtKB-KW"/>
</dbReference>
<dbReference type="GO" id="GO:0009060">
    <property type="term" value="P:aerobic respiration"/>
    <property type="evidence" value="ECO:0007669"/>
    <property type="project" value="TreeGrafter"/>
</dbReference>
<dbReference type="GO" id="GO:0015990">
    <property type="term" value="P:electron transport coupled proton transport"/>
    <property type="evidence" value="ECO:0007669"/>
    <property type="project" value="TreeGrafter"/>
</dbReference>
<dbReference type="GO" id="GO:0019684">
    <property type="term" value="P:photosynthesis, light reaction"/>
    <property type="evidence" value="ECO:0007669"/>
    <property type="project" value="UniProtKB-UniRule"/>
</dbReference>
<dbReference type="FunFam" id="3.40.50.12280:FF:000003">
    <property type="entry name" value="NAD(P)H-quinone oxidoreductase subunit K, chloroplastic"/>
    <property type="match status" value="1"/>
</dbReference>
<dbReference type="Gene3D" id="3.40.50.12280">
    <property type="match status" value="1"/>
</dbReference>
<dbReference type="HAMAP" id="MF_01356">
    <property type="entry name" value="NDH1_NuoB"/>
    <property type="match status" value="1"/>
</dbReference>
<dbReference type="InterPro" id="IPR006137">
    <property type="entry name" value="NADH_UbQ_OxRdtase-like_20kDa"/>
</dbReference>
<dbReference type="InterPro" id="IPR006138">
    <property type="entry name" value="NADH_UQ_OxRdtase_20Kd_su"/>
</dbReference>
<dbReference type="NCBIfam" id="TIGR01957">
    <property type="entry name" value="nuoB_fam"/>
    <property type="match status" value="1"/>
</dbReference>
<dbReference type="NCBIfam" id="NF005012">
    <property type="entry name" value="PRK06411.1"/>
    <property type="match status" value="1"/>
</dbReference>
<dbReference type="PANTHER" id="PTHR11995">
    <property type="entry name" value="NADH DEHYDROGENASE"/>
    <property type="match status" value="1"/>
</dbReference>
<dbReference type="PANTHER" id="PTHR11995:SF14">
    <property type="entry name" value="NADH DEHYDROGENASE [UBIQUINONE] IRON-SULFUR PROTEIN 7, MITOCHONDRIAL"/>
    <property type="match status" value="1"/>
</dbReference>
<dbReference type="Pfam" id="PF01058">
    <property type="entry name" value="Oxidored_q6"/>
    <property type="match status" value="1"/>
</dbReference>
<dbReference type="SUPFAM" id="SSF56770">
    <property type="entry name" value="HydA/Nqo6-like"/>
    <property type="match status" value="1"/>
</dbReference>
<dbReference type="PROSITE" id="PS01150">
    <property type="entry name" value="COMPLEX1_20K"/>
    <property type="match status" value="1"/>
</dbReference>
<evidence type="ECO:0000255" key="1">
    <source>
        <dbReference type="HAMAP-Rule" id="MF_01356"/>
    </source>
</evidence>
<keyword id="KW-0004">4Fe-4S</keyword>
<keyword id="KW-0150">Chloroplast</keyword>
<keyword id="KW-0408">Iron</keyword>
<keyword id="KW-0411">Iron-sulfur</keyword>
<keyword id="KW-0472">Membrane</keyword>
<keyword id="KW-0479">Metal-binding</keyword>
<keyword id="KW-0520">NAD</keyword>
<keyword id="KW-0521">NADP</keyword>
<keyword id="KW-0934">Plastid</keyword>
<keyword id="KW-0618">Plastoquinone</keyword>
<keyword id="KW-0874">Quinone</keyword>
<keyword id="KW-0793">Thylakoid</keyword>
<keyword id="KW-1278">Translocase</keyword>
<keyword id="KW-0813">Transport</keyword>